<dbReference type="EMBL" id="AE017125">
    <property type="protein sequence ID" value="AAP78145.1"/>
    <property type="molecule type" value="Genomic_DNA"/>
</dbReference>
<dbReference type="RefSeq" id="WP_011116388.1">
    <property type="nucleotide sequence ID" value="NC_004917.1"/>
</dbReference>
<dbReference type="SMR" id="Q7VFX7"/>
<dbReference type="STRING" id="235279.HH_1548"/>
<dbReference type="KEGG" id="hhe:HH_1548"/>
<dbReference type="eggNOG" id="COG0556">
    <property type="taxonomic scope" value="Bacteria"/>
</dbReference>
<dbReference type="HOGENOM" id="CLU_009621_2_1_7"/>
<dbReference type="OrthoDB" id="9806651at2"/>
<dbReference type="Proteomes" id="UP000002495">
    <property type="component" value="Chromosome"/>
</dbReference>
<dbReference type="GO" id="GO:0005737">
    <property type="term" value="C:cytoplasm"/>
    <property type="evidence" value="ECO:0007669"/>
    <property type="project" value="UniProtKB-SubCell"/>
</dbReference>
<dbReference type="GO" id="GO:0009380">
    <property type="term" value="C:excinuclease repair complex"/>
    <property type="evidence" value="ECO:0007669"/>
    <property type="project" value="InterPro"/>
</dbReference>
<dbReference type="GO" id="GO:0005524">
    <property type="term" value="F:ATP binding"/>
    <property type="evidence" value="ECO:0007669"/>
    <property type="project" value="UniProtKB-UniRule"/>
</dbReference>
<dbReference type="GO" id="GO:0016887">
    <property type="term" value="F:ATP hydrolysis activity"/>
    <property type="evidence" value="ECO:0007669"/>
    <property type="project" value="InterPro"/>
</dbReference>
<dbReference type="GO" id="GO:0003677">
    <property type="term" value="F:DNA binding"/>
    <property type="evidence" value="ECO:0007669"/>
    <property type="project" value="UniProtKB-UniRule"/>
</dbReference>
<dbReference type="GO" id="GO:0009381">
    <property type="term" value="F:excinuclease ABC activity"/>
    <property type="evidence" value="ECO:0007669"/>
    <property type="project" value="UniProtKB-UniRule"/>
</dbReference>
<dbReference type="GO" id="GO:0006289">
    <property type="term" value="P:nucleotide-excision repair"/>
    <property type="evidence" value="ECO:0007669"/>
    <property type="project" value="UniProtKB-UniRule"/>
</dbReference>
<dbReference type="GO" id="GO:0009432">
    <property type="term" value="P:SOS response"/>
    <property type="evidence" value="ECO:0007669"/>
    <property type="project" value="UniProtKB-UniRule"/>
</dbReference>
<dbReference type="CDD" id="cd17916">
    <property type="entry name" value="DEXHc_UvrB"/>
    <property type="match status" value="1"/>
</dbReference>
<dbReference type="CDD" id="cd18790">
    <property type="entry name" value="SF2_C_UvrB"/>
    <property type="match status" value="1"/>
</dbReference>
<dbReference type="Gene3D" id="3.40.50.300">
    <property type="entry name" value="P-loop containing nucleotide triphosphate hydrolases"/>
    <property type="match status" value="3"/>
</dbReference>
<dbReference type="Gene3D" id="4.10.860.10">
    <property type="entry name" value="UVR domain"/>
    <property type="match status" value="1"/>
</dbReference>
<dbReference type="HAMAP" id="MF_00204">
    <property type="entry name" value="UvrB"/>
    <property type="match status" value="1"/>
</dbReference>
<dbReference type="InterPro" id="IPR006935">
    <property type="entry name" value="Helicase/UvrB_N"/>
</dbReference>
<dbReference type="InterPro" id="IPR014001">
    <property type="entry name" value="Helicase_ATP-bd"/>
</dbReference>
<dbReference type="InterPro" id="IPR001650">
    <property type="entry name" value="Helicase_C-like"/>
</dbReference>
<dbReference type="InterPro" id="IPR027417">
    <property type="entry name" value="P-loop_NTPase"/>
</dbReference>
<dbReference type="InterPro" id="IPR001943">
    <property type="entry name" value="UVR_dom"/>
</dbReference>
<dbReference type="InterPro" id="IPR036876">
    <property type="entry name" value="UVR_dom_sf"/>
</dbReference>
<dbReference type="InterPro" id="IPR004807">
    <property type="entry name" value="UvrB"/>
</dbReference>
<dbReference type="InterPro" id="IPR041471">
    <property type="entry name" value="UvrB_inter"/>
</dbReference>
<dbReference type="InterPro" id="IPR024759">
    <property type="entry name" value="UvrB_YAD/RRR_dom"/>
</dbReference>
<dbReference type="NCBIfam" id="NF003673">
    <property type="entry name" value="PRK05298.1"/>
    <property type="match status" value="1"/>
</dbReference>
<dbReference type="NCBIfam" id="TIGR00631">
    <property type="entry name" value="uvrb"/>
    <property type="match status" value="1"/>
</dbReference>
<dbReference type="PANTHER" id="PTHR24029">
    <property type="entry name" value="UVRABC SYSTEM PROTEIN B"/>
    <property type="match status" value="1"/>
</dbReference>
<dbReference type="PANTHER" id="PTHR24029:SF0">
    <property type="entry name" value="UVRABC SYSTEM PROTEIN B"/>
    <property type="match status" value="1"/>
</dbReference>
<dbReference type="Pfam" id="PF00271">
    <property type="entry name" value="Helicase_C"/>
    <property type="match status" value="1"/>
</dbReference>
<dbReference type="Pfam" id="PF04851">
    <property type="entry name" value="ResIII"/>
    <property type="match status" value="1"/>
</dbReference>
<dbReference type="Pfam" id="PF02151">
    <property type="entry name" value="UVR"/>
    <property type="match status" value="1"/>
</dbReference>
<dbReference type="Pfam" id="PF12344">
    <property type="entry name" value="UvrB"/>
    <property type="match status" value="1"/>
</dbReference>
<dbReference type="Pfam" id="PF17757">
    <property type="entry name" value="UvrB_inter"/>
    <property type="match status" value="1"/>
</dbReference>
<dbReference type="SMART" id="SM00487">
    <property type="entry name" value="DEXDc"/>
    <property type="match status" value="1"/>
</dbReference>
<dbReference type="SMART" id="SM00490">
    <property type="entry name" value="HELICc"/>
    <property type="match status" value="1"/>
</dbReference>
<dbReference type="SUPFAM" id="SSF46600">
    <property type="entry name" value="C-terminal UvrC-binding domain of UvrB"/>
    <property type="match status" value="1"/>
</dbReference>
<dbReference type="SUPFAM" id="SSF52540">
    <property type="entry name" value="P-loop containing nucleoside triphosphate hydrolases"/>
    <property type="match status" value="2"/>
</dbReference>
<dbReference type="PROSITE" id="PS51192">
    <property type="entry name" value="HELICASE_ATP_BIND_1"/>
    <property type="match status" value="2"/>
</dbReference>
<dbReference type="PROSITE" id="PS51194">
    <property type="entry name" value="HELICASE_CTER"/>
    <property type="match status" value="1"/>
</dbReference>
<dbReference type="PROSITE" id="PS50151">
    <property type="entry name" value="UVR"/>
    <property type="match status" value="1"/>
</dbReference>
<gene>
    <name evidence="1" type="primary">uvrB</name>
    <name type="ordered locus">HH_1548</name>
</gene>
<comment type="function">
    <text evidence="1">The UvrABC repair system catalyzes the recognition and processing of DNA lesions. A damage recognition complex composed of 2 UvrA and 2 UvrB subunits scans DNA for abnormalities. Upon binding of the UvrA(2)B(2) complex to a putative damaged site, the DNA wraps around one UvrB monomer. DNA wrap is dependent on ATP binding by UvrB and probably causes local melting of the DNA helix, facilitating insertion of UvrB beta-hairpin between the DNA strands. Then UvrB probes one DNA strand for the presence of a lesion. If a lesion is found the UvrA subunits dissociate and the UvrB-DNA preincision complex is formed. This complex is subsequently bound by UvrC and the second UvrB is released. If no lesion is found, the DNA wraps around the other UvrB subunit that will check the other stand for damage.</text>
</comment>
<comment type="subunit">
    <text evidence="1">Forms a heterotetramer with UvrA during the search for lesions. Interacts with UvrC in an incision complex.</text>
</comment>
<comment type="subcellular location">
    <subcellularLocation>
        <location evidence="1">Cytoplasm</location>
    </subcellularLocation>
</comment>
<comment type="domain">
    <text evidence="1">The beta-hairpin motif is involved in DNA binding.</text>
</comment>
<comment type="similarity">
    <text evidence="1">Belongs to the UvrB family.</text>
</comment>
<sequence length="658" mass="75503">MGKFILDSQFAPAGDQPQAIQKITQFIHNGAQYSTLVGVTGSGKTYTMANIIANLNIPTLIMTHNKTLAAQLYSEFRGFFPKNHVEYFISHFDYYQPEAYIPRRDLFIEKDSSINEDLERLRLSATTSLLAYDDIIVIASVSANYGLGNPAEYLTMIHKFEIGQEEAQKTLLLKLVDMGYTRNDTIFERGNFRVNGEVIDIFPAYNEKEFIRIEFFGDEIERIGVFDALERTALTQLESFVLYAANQFIVGAQRLQSAIKNIEVELENRLEEFVSQDKQIEYQRLKTRTEFDLEMIKESGICKGIENYARHLTGKKAGETPYSLLDYFEQKGKPYLLIVDESHVSLPQFGGMYAGDRSRKEVLVEYGFRLPSALDNRPLRFDEFINKAPHFLFVSATPAQKELELSQEHIAEQIIRPTGLLDPLYEVRDADNAVLDLYDEIKARIAKNQRVLITTLTKKMAEELSKYYAELGIKVRYMHSDIDAIERNHLIRALRLGEFDVLIGINLLREGLDLPEVSLIAIMDADKEGFLRSETSLIQTMGRAARNVEGKVILYAKKITGSMQRAFEVTDYRRTKQEEFNRIHNITPKSVQRNVEQELKIESSGLSRLYEKASKKIPKSERESIIKELNIKMHQAAKALEFEEAARLRDEIARIRTM</sequence>
<name>UVRB_HELHP</name>
<evidence type="ECO:0000255" key="1">
    <source>
        <dbReference type="HAMAP-Rule" id="MF_00204"/>
    </source>
</evidence>
<accession>Q7VFX7</accession>
<protein>
    <recommendedName>
        <fullName evidence="1">UvrABC system protein B</fullName>
        <shortName evidence="1">Protein UvrB</shortName>
    </recommendedName>
    <alternativeName>
        <fullName evidence="1">Excinuclease ABC subunit B</fullName>
    </alternativeName>
</protein>
<keyword id="KW-0067">ATP-binding</keyword>
<keyword id="KW-0963">Cytoplasm</keyword>
<keyword id="KW-0227">DNA damage</keyword>
<keyword id="KW-0228">DNA excision</keyword>
<keyword id="KW-0234">DNA repair</keyword>
<keyword id="KW-0267">Excision nuclease</keyword>
<keyword id="KW-0547">Nucleotide-binding</keyword>
<keyword id="KW-1185">Reference proteome</keyword>
<keyword id="KW-0742">SOS response</keyword>
<feature type="chain" id="PRO_0000227319" description="UvrABC system protein B">
    <location>
        <begin position="1"/>
        <end position="658"/>
    </location>
</feature>
<feature type="domain" description="Helicase ATP-binding" evidence="1">
    <location>
        <begin position="25"/>
        <end position="416"/>
    </location>
</feature>
<feature type="domain" description="Helicase C-terminal" evidence="1">
    <location>
        <begin position="433"/>
        <end position="607"/>
    </location>
</feature>
<feature type="domain" description="UVR" evidence="1">
    <location>
        <begin position="623"/>
        <end position="658"/>
    </location>
</feature>
<feature type="short sequence motif" description="Beta-hairpin">
    <location>
        <begin position="91"/>
        <end position="114"/>
    </location>
</feature>
<feature type="binding site" evidence="1">
    <location>
        <begin position="38"/>
        <end position="45"/>
    </location>
    <ligand>
        <name>ATP</name>
        <dbReference type="ChEBI" id="CHEBI:30616"/>
    </ligand>
</feature>
<organism>
    <name type="scientific">Helicobacter hepaticus (strain ATCC 51449 / 3B1)</name>
    <dbReference type="NCBI Taxonomy" id="235279"/>
    <lineage>
        <taxon>Bacteria</taxon>
        <taxon>Pseudomonadati</taxon>
        <taxon>Campylobacterota</taxon>
        <taxon>Epsilonproteobacteria</taxon>
        <taxon>Campylobacterales</taxon>
        <taxon>Helicobacteraceae</taxon>
        <taxon>Helicobacter</taxon>
    </lineage>
</organism>
<reference key="1">
    <citation type="journal article" date="2003" name="Proc. Natl. Acad. Sci. U.S.A.">
        <title>The complete genome sequence of the carcinogenic bacterium Helicobacter hepaticus.</title>
        <authorList>
            <person name="Suerbaum S."/>
            <person name="Josenhans C."/>
            <person name="Sterzenbach T."/>
            <person name="Drescher B."/>
            <person name="Brandt P."/>
            <person name="Bell M."/>
            <person name="Droege M."/>
            <person name="Fartmann B."/>
            <person name="Fischer H.-P."/>
            <person name="Ge Z."/>
            <person name="Hoerster A."/>
            <person name="Holland R."/>
            <person name="Klein K."/>
            <person name="Koenig J."/>
            <person name="Macko L."/>
            <person name="Mendz G.L."/>
            <person name="Nyakatura G."/>
            <person name="Schauer D.B."/>
            <person name="Shen Z."/>
            <person name="Weber J."/>
            <person name="Frosch M."/>
            <person name="Fox J.G."/>
        </authorList>
    </citation>
    <scope>NUCLEOTIDE SEQUENCE [LARGE SCALE GENOMIC DNA]</scope>
    <source>
        <strain>ATCC 51449 / 3B1</strain>
    </source>
</reference>
<proteinExistence type="inferred from homology"/>